<comment type="function">
    <text evidence="3">Probable transcription factor which regulates lipid metabolism.</text>
</comment>
<comment type="subcellular location">
    <subcellularLocation>
        <location evidence="4">Nucleus</location>
    </subcellularLocation>
</comment>
<comment type="tissue specificity">
    <text evidence="3">Expressed predominantly in intestine.</text>
</comment>
<comment type="developmental stage">
    <text evidence="3">Expressed in all developmental stages, increasing gradually from embryo to larval L3 stage, decreasing in L4 and stabilizing in adult stage.</text>
</comment>
<comment type="induction">
    <text evidence="3">Expression is repressed in response to high levels of dietary calcium.</text>
</comment>
<comment type="disruption phenotype">
    <text evidence="3">Lipid contents in the intestine increase by 44%, but increase is less in response to high levels of dietary calcium.</text>
</comment>
<comment type="similarity">
    <text evidence="4">Belongs to the krueppel C2H2-type zinc-finger protein family.</text>
</comment>
<reference evidence="5" key="1">
    <citation type="journal article" date="1998" name="Science">
        <title>Genome sequence of the nematode C. elegans: a platform for investigating biology.</title>
        <authorList>
            <consortium name="The C. elegans sequencing consortium"/>
        </authorList>
    </citation>
    <scope>NUCLEOTIDE SEQUENCE [LARGE SCALE GENOMIC DNA]</scope>
    <source>
        <strain evidence="5">Bristol N2</strain>
    </source>
</reference>
<reference evidence="4" key="2">
    <citation type="journal article" date="2017" name="Nutr. Metab.">
        <title>Defective lipid metabolism associated with mutation in klf-2 and klf-3: important roles of essential dietary salts in fat storage.</title>
        <authorList>
            <person name="Ling J."/>
            <person name="Brey C."/>
            <person name="Schilling M."/>
            <person name="Lateef F."/>
            <person name="Lopez-Dee Z.P."/>
            <person name="Fernandes K."/>
            <person name="Thiruchelvam K."/>
            <person name="Wang Y."/>
            <person name="Chandel K."/>
            <person name="Rau K."/>
            <person name="Parhar R."/>
            <person name="Al-Mohanna F."/>
            <person name="Gaugler R."/>
            <person name="Hashmi S."/>
        </authorList>
    </citation>
    <scope>FUNCTION</scope>
    <scope>DEVELOPMENTAL STAGE</scope>
    <scope>DISRUPTION PHENOTYPE</scope>
</reference>
<feature type="chain" id="PRO_0000452531" description="Kruppel-like factor 2">
    <location>
        <begin position="1"/>
        <end position="299"/>
    </location>
</feature>
<feature type="zinc finger region" description="C2H2-type 1" evidence="1">
    <location>
        <begin position="198"/>
        <end position="222"/>
    </location>
</feature>
<feature type="zinc finger region" description="C2H2-type 2" evidence="1">
    <location>
        <begin position="228"/>
        <end position="252"/>
    </location>
</feature>
<feature type="zinc finger region" description="C2H2-type 3" evidence="1">
    <location>
        <begin position="258"/>
        <end position="280"/>
    </location>
</feature>
<feature type="region of interest" description="Disordered" evidence="2">
    <location>
        <begin position="19"/>
        <end position="38"/>
    </location>
</feature>
<feature type="region of interest" description="Disordered" evidence="2">
    <location>
        <begin position="146"/>
        <end position="189"/>
    </location>
</feature>
<feature type="compositionally biased region" description="Basic residues" evidence="2">
    <location>
        <begin position="23"/>
        <end position="38"/>
    </location>
</feature>
<feature type="compositionally biased region" description="Basic and acidic residues" evidence="2">
    <location>
        <begin position="153"/>
        <end position="180"/>
    </location>
</feature>
<sequence length="299" mass="34809">MYSSIVPSSSNGYYHQSQYQNAHHQHHQQHYHQQSHHHYNGAAAAPVINVHNYHFHTGPVNNQVIEQHYNHHNHVQQTFEENIPQGPHSSFNFSHDFPQQNNSETHLNHMEPSMTPMEHQNSGSSTPYPFEAKLFVPSPAASVSSYSFSSDLSGKDEEDPRIPLKDRGRVYHPQSTEKPKKVPSKRRDKATLDRLRVHKCFYQGCGKVYTKSSHLTAHERVHSGEKPYPCEWPGCSWRFARSDELTRHYRKHTGAKPFACKECSRKFSRSDHLQLHMKRHETDEQDDGMDDFKDFMTFI</sequence>
<name>KLF2_CAEEL</name>
<accession>O62259</accession>
<gene>
    <name evidence="6" type="primary">klf-2</name>
    <name evidence="6" type="ORF">F53F8.1</name>
</gene>
<keyword id="KW-0238">DNA-binding</keyword>
<keyword id="KW-0479">Metal-binding</keyword>
<keyword id="KW-0539">Nucleus</keyword>
<keyword id="KW-1185">Reference proteome</keyword>
<keyword id="KW-0677">Repeat</keyword>
<keyword id="KW-0804">Transcription</keyword>
<keyword id="KW-0805">Transcription regulation</keyword>
<keyword id="KW-0862">Zinc</keyword>
<keyword id="KW-0863">Zinc-finger</keyword>
<evidence type="ECO:0000255" key="1">
    <source>
        <dbReference type="PROSITE-ProRule" id="PRU00042"/>
    </source>
</evidence>
<evidence type="ECO:0000256" key="2">
    <source>
        <dbReference type="SAM" id="MobiDB-lite"/>
    </source>
</evidence>
<evidence type="ECO:0000269" key="3">
    <source>
    </source>
</evidence>
<evidence type="ECO:0000305" key="4"/>
<evidence type="ECO:0000312" key="5">
    <source>
        <dbReference type="Proteomes" id="UP000001940"/>
    </source>
</evidence>
<evidence type="ECO:0000312" key="6">
    <source>
        <dbReference type="WormBase" id="F53F8.1"/>
    </source>
</evidence>
<proteinExistence type="evidence at transcript level"/>
<protein>
    <recommendedName>
        <fullName evidence="4">Kruppel-like factor 2</fullName>
    </recommendedName>
</protein>
<organism evidence="5">
    <name type="scientific">Caenorhabditis elegans</name>
    <dbReference type="NCBI Taxonomy" id="6239"/>
    <lineage>
        <taxon>Eukaryota</taxon>
        <taxon>Metazoa</taxon>
        <taxon>Ecdysozoa</taxon>
        <taxon>Nematoda</taxon>
        <taxon>Chromadorea</taxon>
        <taxon>Rhabditida</taxon>
        <taxon>Rhabditina</taxon>
        <taxon>Rhabditomorpha</taxon>
        <taxon>Rhabditoidea</taxon>
        <taxon>Rhabditidae</taxon>
        <taxon>Peloderinae</taxon>
        <taxon>Caenorhabditis</taxon>
    </lineage>
</organism>
<dbReference type="EMBL" id="BX284605">
    <property type="protein sequence ID" value="CAB04459.2"/>
    <property type="molecule type" value="Genomic_DNA"/>
</dbReference>
<dbReference type="RefSeq" id="NP_507995.2">
    <property type="nucleotide sequence ID" value="NM_075594.4"/>
</dbReference>
<dbReference type="SMR" id="O62259"/>
<dbReference type="IntAct" id="O62259">
    <property type="interactions" value="77"/>
</dbReference>
<dbReference type="STRING" id="6239.F53F8.1.1"/>
<dbReference type="PaxDb" id="6239-F53F8.1"/>
<dbReference type="EnsemblMetazoa" id="F53F8.1.1">
    <property type="protein sequence ID" value="F53F8.1.1"/>
    <property type="gene ID" value="WBGene00009998"/>
</dbReference>
<dbReference type="EnsemblMetazoa" id="F53F8.1.2">
    <property type="protein sequence ID" value="F53F8.1.2"/>
    <property type="gene ID" value="WBGene00009998"/>
</dbReference>
<dbReference type="GeneID" id="186179"/>
<dbReference type="KEGG" id="cel:CELE_F53F8.1"/>
<dbReference type="UCSC" id="F53F8.1">
    <property type="organism name" value="c. elegans"/>
</dbReference>
<dbReference type="AGR" id="WB:WBGene00009998"/>
<dbReference type="CTD" id="186179"/>
<dbReference type="WormBase" id="F53F8.1">
    <property type="protein sequence ID" value="CE44073"/>
    <property type="gene ID" value="WBGene00009998"/>
    <property type="gene designation" value="klf-2"/>
</dbReference>
<dbReference type="eggNOG" id="KOG1721">
    <property type="taxonomic scope" value="Eukaryota"/>
</dbReference>
<dbReference type="HOGENOM" id="CLU_931368_0_0_1"/>
<dbReference type="InParanoid" id="O62259"/>
<dbReference type="OMA" id="KPYPCEW"/>
<dbReference type="OrthoDB" id="4748970at2759"/>
<dbReference type="PhylomeDB" id="O62259"/>
<dbReference type="SignaLink" id="O62259"/>
<dbReference type="PRO" id="PR:O62259"/>
<dbReference type="Proteomes" id="UP000001940">
    <property type="component" value="Chromosome V"/>
</dbReference>
<dbReference type="Bgee" id="WBGene00009998">
    <property type="expression patterns" value="Expressed in pharyngeal muscle cell (C elegans) and 3 other cell types or tissues"/>
</dbReference>
<dbReference type="GO" id="GO:0005634">
    <property type="term" value="C:nucleus"/>
    <property type="evidence" value="ECO:0007669"/>
    <property type="project" value="UniProtKB-SubCell"/>
</dbReference>
<dbReference type="GO" id="GO:0000981">
    <property type="term" value="F:DNA-binding transcription factor activity, RNA polymerase II-specific"/>
    <property type="evidence" value="ECO:0000318"/>
    <property type="project" value="GO_Central"/>
</dbReference>
<dbReference type="GO" id="GO:0000978">
    <property type="term" value="F:RNA polymerase II cis-regulatory region sequence-specific DNA binding"/>
    <property type="evidence" value="ECO:0000318"/>
    <property type="project" value="GO_Central"/>
</dbReference>
<dbReference type="GO" id="GO:0008270">
    <property type="term" value="F:zinc ion binding"/>
    <property type="evidence" value="ECO:0007669"/>
    <property type="project" value="UniProtKB-KW"/>
</dbReference>
<dbReference type="GO" id="GO:0010468">
    <property type="term" value="P:regulation of gene expression"/>
    <property type="evidence" value="ECO:0000315"/>
    <property type="project" value="UniProtKB"/>
</dbReference>
<dbReference type="GO" id="GO:0019216">
    <property type="term" value="P:regulation of lipid metabolic process"/>
    <property type="evidence" value="ECO:0000315"/>
    <property type="project" value="UniProtKB"/>
</dbReference>
<dbReference type="GO" id="GO:0006357">
    <property type="term" value="P:regulation of transcription by RNA polymerase II"/>
    <property type="evidence" value="ECO:0000318"/>
    <property type="project" value="GO_Central"/>
</dbReference>
<dbReference type="FunFam" id="3.30.160.60:FF:000018">
    <property type="entry name" value="Krueppel-like factor 15"/>
    <property type="match status" value="1"/>
</dbReference>
<dbReference type="FunFam" id="3.30.160.60:FF:002639">
    <property type="entry name" value="Kruppel-Like Factor (Zinc finger protein)"/>
    <property type="match status" value="1"/>
</dbReference>
<dbReference type="FunFam" id="3.30.160.60:FF:000624">
    <property type="entry name" value="zinc finger protein 697"/>
    <property type="match status" value="1"/>
</dbReference>
<dbReference type="Gene3D" id="3.30.160.60">
    <property type="entry name" value="Classic Zinc Finger"/>
    <property type="match status" value="3"/>
</dbReference>
<dbReference type="InterPro" id="IPR036236">
    <property type="entry name" value="Znf_C2H2_sf"/>
</dbReference>
<dbReference type="InterPro" id="IPR013087">
    <property type="entry name" value="Znf_C2H2_type"/>
</dbReference>
<dbReference type="PANTHER" id="PTHR23235">
    <property type="entry name" value="KRUEPPEL-LIKE TRANSCRIPTION FACTOR"/>
    <property type="match status" value="1"/>
</dbReference>
<dbReference type="PANTHER" id="PTHR23235:SF62">
    <property type="entry name" value="KRUPPEL-LIKE FACTOR 2"/>
    <property type="match status" value="1"/>
</dbReference>
<dbReference type="Pfam" id="PF00096">
    <property type="entry name" value="zf-C2H2"/>
    <property type="match status" value="3"/>
</dbReference>
<dbReference type="SMART" id="SM00355">
    <property type="entry name" value="ZnF_C2H2"/>
    <property type="match status" value="3"/>
</dbReference>
<dbReference type="SUPFAM" id="SSF57667">
    <property type="entry name" value="beta-beta-alpha zinc fingers"/>
    <property type="match status" value="2"/>
</dbReference>
<dbReference type="PROSITE" id="PS00028">
    <property type="entry name" value="ZINC_FINGER_C2H2_1"/>
    <property type="match status" value="3"/>
</dbReference>
<dbReference type="PROSITE" id="PS50157">
    <property type="entry name" value="ZINC_FINGER_C2H2_2"/>
    <property type="match status" value="3"/>
</dbReference>